<keyword id="KW-0025">Alternative splicing</keyword>
<keyword id="KW-1185">Reference proteome</keyword>
<keyword id="KW-0808">Transferase</keyword>
<sequence length="216" mass="24492">MDFYYLPGSAPCRAVQMTAAAVGVELNLKLTDLMKGEHMKPEFLKLNPQHCVPTLVDNGFALWESRAIMCYLVEKYGKPCNNDSLYPTDPQKRAIVNQRLYFDMGTLYQRFGDYYYPQIFEGAPANETNFAKIGEALAFLDTFLEGERFVAGGNGYSLADISLYATLTTFEVAGYDFSAYVNVLRWYKSMPELIPASDTNRSWAEAARPFFDKVKH</sequence>
<comment type="function">
    <text evidence="2">Conjugation of reduced glutathione to a wide number of exogenous and endogenous hydrophobic electrophiles.</text>
</comment>
<comment type="catalytic activity">
    <reaction evidence="2">
        <text>RX + glutathione = an S-substituted glutathione + a halide anion + H(+)</text>
        <dbReference type="Rhea" id="RHEA:16437"/>
        <dbReference type="ChEBI" id="CHEBI:15378"/>
        <dbReference type="ChEBI" id="CHEBI:16042"/>
        <dbReference type="ChEBI" id="CHEBI:17792"/>
        <dbReference type="ChEBI" id="CHEBI:57925"/>
        <dbReference type="ChEBI" id="CHEBI:90779"/>
        <dbReference type="EC" id="2.5.1.18"/>
    </reaction>
</comment>
<comment type="subunit">
    <text evidence="2">Homodimer.</text>
</comment>
<comment type="alternative products">
    <event type="alternative splicing"/>
    <isoform>
        <id>O77473-1</id>
        <name evidence="4">B</name>
        <name evidence="4">1-4</name>
        <sequence type="displayed"/>
    </isoform>
    <isoform>
        <id>O77462-1</id>
        <name evidence="4">A</name>
        <name evidence="4">1-3</name>
        <sequence type="external"/>
    </isoform>
    <isoform>
        <id>Q93112-1</id>
        <name evidence="4">C</name>
        <name evidence="4">1-5</name>
        <sequence type="external"/>
    </isoform>
    <isoform>
        <id>Q93113-1</id>
        <name evidence="4">D</name>
        <name>1-1</name>
        <name evidence="4">1-6</name>
        <name>2-1</name>
        <sequence type="external"/>
    </isoform>
</comment>
<comment type="similarity">
    <text evidence="3">Belongs to the GST superfamily. Theta family.</text>
</comment>
<accession>O77473</accession>
<accession>Q7PH26</accession>
<reference evidence="6 8" key="1">
    <citation type="journal article" date="1998" name="Proc. Natl. Acad. Sci. U.S.A.">
        <title>The role of alternative mRNA splicing in generating heterogeneity within the Anopheles gambiae class I glutathione S-transferase family.</title>
        <authorList>
            <person name="Ranson H."/>
            <person name="Collins F.H."/>
            <person name="Hemingway J."/>
        </authorList>
    </citation>
    <scope>NUCLEOTIDE SEQUENCE [GENOMIC DNA / MRNA]</scope>
    <scope>ALTERNATIVE SPLICING</scope>
    <source>
        <strain evidence="8">ZAN/U</strain>
    </source>
</reference>
<reference key="2">
    <citation type="journal article" date="2002" name="Science">
        <title>The genome sequence of the malaria mosquito Anopheles gambiae.</title>
        <authorList>
            <person name="Holt R.A."/>
            <person name="Subramanian G.M."/>
            <person name="Halpern A."/>
            <person name="Sutton G.G."/>
            <person name="Charlab R."/>
            <person name="Nusskern D.R."/>
            <person name="Wincker P."/>
            <person name="Clark A.G."/>
            <person name="Ribeiro J.M.C."/>
            <person name="Wides R."/>
            <person name="Salzberg S.L."/>
            <person name="Loftus B.J."/>
            <person name="Yandell M.D."/>
            <person name="Majoros W.H."/>
            <person name="Rusch D.B."/>
            <person name="Lai Z."/>
            <person name="Kraft C.L."/>
            <person name="Abril J.F."/>
            <person name="Anthouard V."/>
            <person name="Arensburger P."/>
            <person name="Atkinson P.W."/>
            <person name="Baden H."/>
            <person name="de Berardinis V."/>
            <person name="Baldwin D."/>
            <person name="Benes V."/>
            <person name="Biedler J."/>
            <person name="Blass C."/>
            <person name="Bolanos R."/>
            <person name="Boscus D."/>
            <person name="Barnstead M."/>
            <person name="Cai S."/>
            <person name="Center A."/>
            <person name="Chaturverdi K."/>
            <person name="Christophides G.K."/>
            <person name="Chrystal M.A.M."/>
            <person name="Clamp M."/>
            <person name="Cravchik A."/>
            <person name="Curwen V."/>
            <person name="Dana A."/>
            <person name="Delcher A."/>
            <person name="Dew I."/>
            <person name="Evans C.A."/>
            <person name="Flanigan M."/>
            <person name="Grundschober-Freimoser A."/>
            <person name="Friedli L."/>
            <person name="Gu Z."/>
            <person name="Guan P."/>
            <person name="Guigo R."/>
            <person name="Hillenmeyer M.E."/>
            <person name="Hladun S.L."/>
            <person name="Hogan J.R."/>
            <person name="Hong Y.S."/>
            <person name="Hoover J."/>
            <person name="Jaillon O."/>
            <person name="Ke Z."/>
            <person name="Kodira C.D."/>
            <person name="Kokoza E."/>
            <person name="Koutsos A."/>
            <person name="Letunic I."/>
            <person name="Levitsky A.A."/>
            <person name="Liang Y."/>
            <person name="Lin J.-J."/>
            <person name="Lobo N.F."/>
            <person name="Lopez J.R."/>
            <person name="Malek J.A."/>
            <person name="McIntosh T.C."/>
            <person name="Meister S."/>
            <person name="Miller J.R."/>
            <person name="Mobarry C."/>
            <person name="Mongin E."/>
            <person name="Murphy S.D."/>
            <person name="O'Brochta D.A."/>
            <person name="Pfannkoch C."/>
            <person name="Qi R."/>
            <person name="Regier M.A."/>
            <person name="Remington K."/>
            <person name="Shao H."/>
            <person name="Sharakhova M.V."/>
            <person name="Sitter C.D."/>
            <person name="Shetty J."/>
            <person name="Smith T.J."/>
            <person name="Strong R."/>
            <person name="Sun J."/>
            <person name="Thomasova D."/>
            <person name="Ton L.Q."/>
            <person name="Topalis P."/>
            <person name="Tu Z.J."/>
            <person name="Unger M.F."/>
            <person name="Walenz B."/>
            <person name="Wang A.H."/>
            <person name="Wang J."/>
            <person name="Wang M."/>
            <person name="Wang X."/>
            <person name="Woodford K.J."/>
            <person name="Wortman J.R."/>
            <person name="Wu M."/>
            <person name="Yao A."/>
            <person name="Zdobnov E.M."/>
            <person name="Zhang H."/>
            <person name="Zhao Q."/>
            <person name="Zhao S."/>
            <person name="Zhu S.C."/>
            <person name="Zhimulev I."/>
            <person name="Coluzzi M."/>
            <person name="della Torre A."/>
            <person name="Roth C.W."/>
            <person name="Louis C."/>
            <person name="Kalush F."/>
            <person name="Mural R.J."/>
            <person name="Myers E.W."/>
            <person name="Adams M.D."/>
            <person name="Smith H.O."/>
            <person name="Broder S."/>
            <person name="Gardner M.J."/>
            <person name="Fraser C.M."/>
            <person name="Birney E."/>
            <person name="Bork P."/>
            <person name="Brey P.T."/>
            <person name="Venter J.C."/>
            <person name="Weissenbach J."/>
            <person name="Kafatos F.C."/>
            <person name="Collins F.H."/>
            <person name="Hoffman S.L."/>
        </authorList>
    </citation>
    <scope>NUCLEOTIDE SEQUENCE [LARGE SCALE GENOMIC DNA]</scope>
    <source>
        <strain>PEST</strain>
    </source>
</reference>
<evidence type="ECO:0000250" key="1"/>
<evidence type="ECO:0000250" key="2">
    <source>
        <dbReference type="UniProtKB" id="P30711"/>
    </source>
</evidence>
<evidence type="ECO:0000255" key="3"/>
<evidence type="ECO:0000269" key="4">
    <source>
    </source>
</evidence>
<evidence type="ECO:0000303" key="5">
    <source>
    </source>
</evidence>
<evidence type="ECO:0000305" key="6"/>
<evidence type="ECO:0000312" key="7">
    <source>
        <dbReference type="EMBL" id="AAC79994.1"/>
    </source>
</evidence>
<evidence type="ECO:0000312" key="8">
    <source>
        <dbReference type="EMBL" id="AAC79998.1"/>
    </source>
</evidence>
<dbReference type="EC" id="2.5.1.18"/>
<dbReference type="EMBL" id="AF071160">
    <property type="protein sequence ID" value="AAC79994.1"/>
    <property type="molecule type" value="Genomic_DNA"/>
</dbReference>
<dbReference type="EMBL" id="AF071162">
    <property type="protein sequence ID" value="AAC79998.1"/>
    <property type="molecule type" value="mRNA"/>
</dbReference>
<dbReference type="EMBL" id="AAAB01008880">
    <property type="protein sequence ID" value="EAA44711.1"/>
    <property type="molecule type" value="Genomic_DNA"/>
</dbReference>
<dbReference type="RefSeq" id="XP_313048.1">
    <molecule id="O77473-1"/>
    <property type="nucleotide sequence ID" value="XM_313048.4"/>
</dbReference>
<dbReference type="SMR" id="O77473"/>
<dbReference type="STRING" id="7165.O77473"/>
<dbReference type="PaxDb" id="7165-AGAP004164-PC"/>
<dbReference type="EnsemblMetazoa" id="AGAP004164-RC">
    <molecule id="O77473-1"/>
    <property type="protein sequence ID" value="AGAP004164-PC"/>
    <property type="gene ID" value="AGAP004164"/>
</dbReference>
<dbReference type="GeneID" id="1273988"/>
<dbReference type="KEGG" id="aga:1273988"/>
<dbReference type="VEuPathDB" id="VectorBase:AGAMI1_006046"/>
<dbReference type="VEuPathDB" id="VectorBase:AGAP004164"/>
<dbReference type="eggNOG" id="KOG0867">
    <property type="taxonomic scope" value="Eukaryota"/>
</dbReference>
<dbReference type="InParanoid" id="O77473"/>
<dbReference type="OrthoDB" id="6491150at2759"/>
<dbReference type="PhylomeDB" id="O77473"/>
<dbReference type="Proteomes" id="UP000007062">
    <property type="component" value="Chromosome 2R"/>
</dbReference>
<dbReference type="GO" id="GO:0005576">
    <property type="term" value="C:extracellular region"/>
    <property type="evidence" value="ECO:0000250"/>
    <property type="project" value="UniProtKB"/>
</dbReference>
<dbReference type="GO" id="GO:0004364">
    <property type="term" value="F:glutathione transferase activity"/>
    <property type="evidence" value="ECO:0000250"/>
    <property type="project" value="UniProtKB"/>
</dbReference>
<dbReference type="GO" id="GO:0006749">
    <property type="term" value="P:glutathione metabolic process"/>
    <property type="evidence" value="ECO:0000250"/>
    <property type="project" value="UniProtKB"/>
</dbReference>
<dbReference type="CDD" id="cd03177">
    <property type="entry name" value="GST_C_Delta_Epsilon"/>
    <property type="match status" value="1"/>
</dbReference>
<dbReference type="CDD" id="cd03045">
    <property type="entry name" value="GST_N_Delta_Epsilon"/>
    <property type="match status" value="1"/>
</dbReference>
<dbReference type="FunFam" id="3.40.30.10:FF:000034">
    <property type="entry name" value="glutathione S-transferase 1"/>
    <property type="match status" value="1"/>
</dbReference>
<dbReference type="FunFam" id="1.20.1050.10:FF:000007">
    <property type="entry name" value="Glutathione S-transferase 1-1"/>
    <property type="match status" value="1"/>
</dbReference>
<dbReference type="Gene3D" id="1.20.1050.10">
    <property type="match status" value="1"/>
</dbReference>
<dbReference type="Gene3D" id="3.40.30.10">
    <property type="entry name" value="Glutaredoxin"/>
    <property type="match status" value="1"/>
</dbReference>
<dbReference type="InterPro" id="IPR010987">
    <property type="entry name" value="Glutathione-S-Trfase_C-like"/>
</dbReference>
<dbReference type="InterPro" id="IPR036282">
    <property type="entry name" value="Glutathione-S-Trfase_C_sf"/>
</dbReference>
<dbReference type="InterPro" id="IPR004045">
    <property type="entry name" value="Glutathione_S-Trfase_N"/>
</dbReference>
<dbReference type="InterPro" id="IPR036249">
    <property type="entry name" value="Thioredoxin-like_sf"/>
</dbReference>
<dbReference type="PANTHER" id="PTHR43969">
    <property type="entry name" value="GLUTATHIONE S TRANSFERASE D10, ISOFORM A-RELATED"/>
    <property type="match status" value="1"/>
</dbReference>
<dbReference type="PANTHER" id="PTHR43969:SF9">
    <property type="entry name" value="GLUTATHIONE S TRANSFERASE D10, ISOFORM A-RELATED"/>
    <property type="match status" value="1"/>
</dbReference>
<dbReference type="Pfam" id="PF13410">
    <property type="entry name" value="GST_C_2"/>
    <property type="match status" value="1"/>
</dbReference>
<dbReference type="Pfam" id="PF02798">
    <property type="entry name" value="GST_N"/>
    <property type="match status" value="1"/>
</dbReference>
<dbReference type="SFLD" id="SFLDG01153">
    <property type="entry name" value="Main.4:_Theta-like"/>
    <property type="match status" value="1"/>
</dbReference>
<dbReference type="SFLD" id="SFLDG00358">
    <property type="entry name" value="Main_(cytGST)"/>
    <property type="match status" value="1"/>
</dbReference>
<dbReference type="SUPFAM" id="SSF47616">
    <property type="entry name" value="GST C-terminal domain-like"/>
    <property type="match status" value="1"/>
</dbReference>
<dbReference type="SUPFAM" id="SSF52833">
    <property type="entry name" value="Thioredoxin-like"/>
    <property type="match status" value="1"/>
</dbReference>
<dbReference type="PROSITE" id="PS50405">
    <property type="entry name" value="GST_CTER"/>
    <property type="match status" value="1"/>
</dbReference>
<dbReference type="PROSITE" id="PS50404">
    <property type="entry name" value="GST_NTER"/>
    <property type="match status" value="1"/>
</dbReference>
<gene>
    <name evidence="5" type="primary">GstD1</name>
    <name evidence="7" type="synonym">GST1a</name>
    <name type="ORF">AGAP004164</name>
</gene>
<protein>
    <recommendedName>
        <fullName>Glutathione S-transferase 1, isoform B</fullName>
        <ecNumber>2.5.1.18</ecNumber>
    </recommendedName>
    <alternativeName>
        <fullName>AgGst1-alpha</fullName>
    </alternativeName>
    <alternativeName>
        <fullName>Aggst1-4</fullName>
    </alternativeName>
    <alternativeName>
        <fullName>GST class-theta</fullName>
    </alternativeName>
</protein>
<feature type="chain" id="PRO_0000283093" description="Glutathione S-transferase 1, isoform B">
    <location>
        <begin position="1"/>
        <end position="216"/>
    </location>
</feature>
<feature type="domain" description="GST N-terminal">
    <location>
        <begin position="1"/>
        <end position="80"/>
    </location>
</feature>
<feature type="domain" description="GST C-terminal">
    <location>
        <begin position="89"/>
        <end position="210"/>
    </location>
</feature>
<feature type="binding site" evidence="1">
    <location>
        <position position="9"/>
    </location>
    <ligand>
        <name>glutathione</name>
        <dbReference type="ChEBI" id="CHEBI:57925"/>
    </ligand>
</feature>
<feature type="binding site" evidence="1">
    <location>
        <begin position="50"/>
        <end position="52"/>
    </location>
    <ligand>
        <name>glutathione</name>
        <dbReference type="ChEBI" id="CHEBI:57925"/>
    </ligand>
</feature>
<feature type="binding site" evidence="1">
    <location>
        <begin position="64"/>
        <end position="66"/>
    </location>
    <ligand>
        <name>glutathione</name>
        <dbReference type="ChEBI" id="CHEBI:57925"/>
    </ligand>
</feature>
<feature type="sequence conflict" description="In Ref. 1; AAC79994/AAC79998." evidence="6" ref="1">
    <original>N</original>
    <variation>S</variation>
    <location>
        <position position="58"/>
    </location>
</feature>
<feature type="sequence conflict" description="In Ref. 1; AAC79994/AAC79998." evidence="6" ref="1">
    <original>T</original>
    <variation>A</variation>
    <location>
        <position position="128"/>
    </location>
</feature>
<name>GST1B_ANOGA</name>
<proteinExistence type="evidence at transcript level"/>
<organism>
    <name type="scientific">Anopheles gambiae</name>
    <name type="common">African malaria mosquito</name>
    <dbReference type="NCBI Taxonomy" id="7165"/>
    <lineage>
        <taxon>Eukaryota</taxon>
        <taxon>Metazoa</taxon>
        <taxon>Ecdysozoa</taxon>
        <taxon>Arthropoda</taxon>
        <taxon>Hexapoda</taxon>
        <taxon>Insecta</taxon>
        <taxon>Pterygota</taxon>
        <taxon>Neoptera</taxon>
        <taxon>Endopterygota</taxon>
        <taxon>Diptera</taxon>
        <taxon>Nematocera</taxon>
        <taxon>Culicoidea</taxon>
        <taxon>Culicidae</taxon>
        <taxon>Anophelinae</taxon>
        <taxon>Anopheles</taxon>
    </lineage>
</organism>